<accession>A6MMZ9</accession>
<evidence type="ECO:0000255" key="1">
    <source>
        <dbReference type="HAMAP-Rule" id="MF_01351"/>
    </source>
</evidence>
<sequence>MFPMLNGFMNYGQQTVRAARYIGQSFMITLSHTNRLPVTIQYPYEKSITSERFRGRIHFEFDKCIACEVCVRVCPIDLPVVDWRLETDIRKKRLLNYSIDFGICIFCGNCVEYCPTNCLSMTEEYELSTYDRHELNYNQISLGRLPMSVIGDYTIQTIMNSTQMKIAMDKSLDSRTITNY</sequence>
<gene>
    <name evidence="1" type="primary">ndhI</name>
</gene>
<proteinExistence type="inferred from homology"/>
<name>NDHI_ILLOL</name>
<dbReference type="EC" id="7.1.1.-" evidence="1"/>
<dbReference type="EMBL" id="EF380354">
    <property type="protein sequence ID" value="ABQ52574.1"/>
    <property type="molecule type" value="Genomic_DNA"/>
</dbReference>
<dbReference type="RefSeq" id="YP_001294325.1">
    <property type="nucleotide sequence ID" value="NC_009600.1"/>
</dbReference>
<dbReference type="SMR" id="A6MMZ9"/>
<dbReference type="GeneID" id="5236711"/>
<dbReference type="GO" id="GO:0009535">
    <property type="term" value="C:chloroplast thylakoid membrane"/>
    <property type="evidence" value="ECO:0007669"/>
    <property type="project" value="UniProtKB-SubCell"/>
</dbReference>
<dbReference type="GO" id="GO:0051539">
    <property type="term" value="F:4 iron, 4 sulfur cluster binding"/>
    <property type="evidence" value="ECO:0007669"/>
    <property type="project" value="UniProtKB-KW"/>
</dbReference>
<dbReference type="GO" id="GO:0005506">
    <property type="term" value="F:iron ion binding"/>
    <property type="evidence" value="ECO:0007669"/>
    <property type="project" value="UniProtKB-UniRule"/>
</dbReference>
<dbReference type="GO" id="GO:0008137">
    <property type="term" value="F:NADH dehydrogenase (ubiquinone) activity"/>
    <property type="evidence" value="ECO:0007669"/>
    <property type="project" value="InterPro"/>
</dbReference>
<dbReference type="GO" id="GO:0048038">
    <property type="term" value="F:quinone binding"/>
    <property type="evidence" value="ECO:0007669"/>
    <property type="project" value="UniProtKB-KW"/>
</dbReference>
<dbReference type="GO" id="GO:0019684">
    <property type="term" value="P:photosynthesis, light reaction"/>
    <property type="evidence" value="ECO:0007669"/>
    <property type="project" value="UniProtKB-UniRule"/>
</dbReference>
<dbReference type="FunFam" id="3.30.70.3270:FF:000006">
    <property type="entry name" value="NAD(P)H-quinone oxidoreductase subunit I, chloroplastic"/>
    <property type="match status" value="1"/>
</dbReference>
<dbReference type="Gene3D" id="3.30.70.3270">
    <property type="match status" value="1"/>
</dbReference>
<dbReference type="HAMAP" id="MF_01351">
    <property type="entry name" value="NDH1_NuoI"/>
    <property type="match status" value="1"/>
</dbReference>
<dbReference type="InterPro" id="IPR017896">
    <property type="entry name" value="4Fe4S_Fe-S-bd"/>
</dbReference>
<dbReference type="InterPro" id="IPR017900">
    <property type="entry name" value="4Fe4S_Fe_S_CS"/>
</dbReference>
<dbReference type="InterPro" id="IPR010226">
    <property type="entry name" value="NADH_quinone_OxRdtase_chainI"/>
</dbReference>
<dbReference type="InterPro" id="IPR004497">
    <property type="entry name" value="NDHI"/>
</dbReference>
<dbReference type="NCBIfam" id="TIGR00403">
    <property type="entry name" value="ndhI"/>
    <property type="match status" value="1"/>
</dbReference>
<dbReference type="NCBIfam" id="TIGR01971">
    <property type="entry name" value="NuoI"/>
    <property type="match status" value="1"/>
</dbReference>
<dbReference type="NCBIfam" id="NF004537">
    <property type="entry name" value="PRK05888.1-3"/>
    <property type="match status" value="1"/>
</dbReference>
<dbReference type="PANTHER" id="PTHR47275">
    <property type="entry name" value="NAD(P)H-QUINONE OXIDOREDUCTASE SUBUNIT I, CHLOROPLASTIC"/>
    <property type="match status" value="1"/>
</dbReference>
<dbReference type="PANTHER" id="PTHR47275:SF1">
    <property type="entry name" value="NAD(P)H-QUINONE OXIDOREDUCTASE SUBUNIT I, CHLOROPLASTIC"/>
    <property type="match status" value="1"/>
</dbReference>
<dbReference type="Pfam" id="PF12838">
    <property type="entry name" value="Fer4_7"/>
    <property type="match status" value="1"/>
</dbReference>
<dbReference type="SUPFAM" id="SSF54862">
    <property type="entry name" value="4Fe-4S ferredoxins"/>
    <property type="match status" value="1"/>
</dbReference>
<dbReference type="PROSITE" id="PS00198">
    <property type="entry name" value="4FE4S_FER_1"/>
    <property type="match status" value="2"/>
</dbReference>
<dbReference type="PROSITE" id="PS51379">
    <property type="entry name" value="4FE4S_FER_2"/>
    <property type="match status" value="2"/>
</dbReference>
<keyword id="KW-0004">4Fe-4S</keyword>
<keyword id="KW-0150">Chloroplast</keyword>
<keyword id="KW-0408">Iron</keyword>
<keyword id="KW-0411">Iron-sulfur</keyword>
<keyword id="KW-0472">Membrane</keyword>
<keyword id="KW-0479">Metal-binding</keyword>
<keyword id="KW-0520">NAD</keyword>
<keyword id="KW-0521">NADP</keyword>
<keyword id="KW-0934">Plastid</keyword>
<keyword id="KW-0618">Plastoquinone</keyword>
<keyword id="KW-0874">Quinone</keyword>
<keyword id="KW-0677">Repeat</keyword>
<keyword id="KW-0793">Thylakoid</keyword>
<keyword id="KW-1278">Translocase</keyword>
<organism>
    <name type="scientific">Illicium oligandrum</name>
    <name type="common">Star anise</name>
    <dbReference type="NCBI Taxonomy" id="145286"/>
    <lineage>
        <taxon>Eukaryota</taxon>
        <taxon>Viridiplantae</taxon>
        <taxon>Streptophyta</taxon>
        <taxon>Embryophyta</taxon>
        <taxon>Tracheophyta</taxon>
        <taxon>Spermatophyta</taxon>
        <taxon>Magnoliopsida</taxon>
        <taxon>Austrobaileyales</taxon>
        <taxon>Schisandraceae</taxon>
        <taxon>Illicium</taxon>
    </lineage>
</organism>
<feature type="chain" id="PRO_0000298577" description="NAD(P)H-quinone oxidoreductase subunit I, chloroplastic">
    <location>
        <begin position="1"/>
        <end position="180"/>
    </location>
</feature>
<feature type="domain" description="4Fe-4S ferredoxin-type 1" evidence="1">
    <location>
        <begin position="55"/>
        <end position="84"/>
    </location>
</feature>
<feature type="domain" description="4Fe-4S ferredoxin-type 2" evidence="1">
    <location>
        <begin position="95"/>
        <end position="124"/>
    </location>
</feature>
<feature type="binding site" evidence="1">
    <location>
        <position position="64"/>
    </location>
    <ligand>
        <name>[4Fe-4S] cluster</name>
        <dbReference type="ChEBI" id="CHEBI:49883"/>
        <label>1</label>
    </ligand>
</feature>
<feature type="binding site" evidence="1">
    <location>
        <position position="67"/>
    </location>
    <ligand>
        <name>[4Fe-4S] cluster</name>
        <dbReference type="ChEBI" id="CHEBI:49883"/>
        <label>1</label>
    </ligand>
</feature>
<feature type="binding site" evidence="1">
    <location>
        <position position="70"/>
    </location>
    <ligand>
        <name>[4Fe-4S] cluster</name>
        <dbReference type="ChEBI" id="CHEBI:49883"/>
        <label>1</label>
    </ligand>
</feature>
<feature type="binding site" evidence="1">
    <location>
        <position position="74"/>
    </location>
    <ligand>
        <name>[4Fe-4S] cluster</name>
        <dbReference type="ChEBI" id="CHEBI:49883"/>
        <label>2</label>
    </ligand>
</feature>
<feature type="binding site" evidence="1">
    <location>
        <position position="104"/>
    </location>
    <ligand>
        <name>[4Fe-4S] cluster</name>
        <dbReference type="ChEBI" id="CHEBI:49883"/>
        <label>2</label>
    </ligand>
</feature>
<feature type="binding site" evidence="1">
    <location>
        <position position="107"/>
    </location>
    <ligand>
        <name>[4Fe-4S] cluster</name>
        <dbReference type="ChEBI" id="CHEBI:49883"/>
        <label>2</label>
    </ligand>
</feature>
<feature type="binding site" evidence="1">
    <location>
        <position position="110"/>
    </location>
    <ligand>
        <name>[4Fe-4S] cluster</name>
        <dbReference type="ChEBI" id="CHEBI:49883"/>
        <label>2</label>
    </ligand>
</feature>
<feature type="binding site" evidence="1">
    <location>
        <position position="114"/>
    </location>
    <ligand>
        <name>[4Fe-4S] cluster</name>
        <dbReference type="ChEBI" id="CHEBI:49883"/>
        <label>1</label>
    </ligand>
</feature>
<geneLocation type="chloroplast"/>
<reference key="1">
    <citation type="journal article" date="2007" name="Mol. Phylogenet. Evol.">
        <title>Phylogenetic and evolutionary implications of complete chloroplast genome sequences of four early-diverging angiosperms: Buxus (Buxaceae), Chloranthus (Chloranthaceae), Dioscorea (Dioscoreaceae), and Illicium (Schisandraceae).</title>
        <authorList>
            <person name="Hansen D.R."/>
            <person name="Dastidar S.G."/>
            <person name="Cai Z."/>
            <person name="Penaflor C."/>
            <person name="Kuehl J.V."/>
            <person name="Boore J.L."/>
            <person name="Jansen R.K."/>
        </authorList>
    </citation>
    <scope>NUCLEOTIDE SEQUENCE [LARGE SCALE GENOMIC DNA]</scope>
</reference>
<protein>
    <recommendedName>
        <fullName evidence="1">NAD(P)H-quinone oxidoreductase subunit I, chloroplastic</fullName>
        <ecNumber evidence="1">7.1.1.-</ecNumber>
    </recommendedName>
    <alternativeName>
        <fullName evidence="1">NAD(P)H dehydrogenase subunit I</fullName>
        <shortName evidence="1">NDH subunit I</shortName>
    </alternativeName>
    <alternativeName>
        <fullName evidence="1">NADH-plastoquinone oxidoreductase subunit I</fullName>
    </alternativeName>
</protein>
<comment type="function">
    <text evidence="1">NDH shuttles electrons from NAD(P)H:plastoquinone, via FMN and iron-sulfur (Fe-S) centers, to quinones in the photosynthetic chain and possibly in a chloroplast respiratory chain. The immediate electron acceptor for the enzyme in this species is believed to be plastoquinone. Couples the redox reaction to proton translocation, and thus conserves the redox energy in a proton gradient.</text>
</comment>
<comment type="catalytic activity">
    <reaction evidence="1">
        <text>a plastoquinone + NADH + (n+1) H(+)(in) = a plastoquinol + NAD(+) + n H(+)(out)</text>
        <dbReference type="Rhea" id="RHEA:42608"/>
        <dbReference type="Rhea" id="RHEA-COMP:9561"/>
        <dbReference type="Rhea" id="RHEA-COMP:9562"/>
        <dbReference type="ChEBI" id="CHEBI:15378"/>
        <dbReference type="ChEBI" id="CHEBI:17757"/>
        <dbReference type="ChEBI" id="CHEBI:57540"/>
        <dbReference type="ChEBI" id="CHEBI:57945"/>
        <dbReference type="ChEBI" id="CHEBI:62192"/>
    </reaction>
</comment>
<comment type="catalytic activity">
    <reaction evidence="1">
        <text>a plastoquinone + NADPH + (n+1) H(+)(in) = a plastoquinol + NADP(+) + n H(+)(out)</text>
        <dbReference type="Rhea" id="RHEA:42612"/>
        <dbReference type="Rhea" id="RHEA-COMP:9561"/>
        <dbReference type="Rhea" id="RHEA-COMP:9562"/>
        <dbReference type="ChEBI" id="CHEBI:15378"/>
        <dbReference type="ChEBI" id="CHEBI:17757"/>
        <dbReference type="ChEBI" id="CHEBI:57783"/>
        <dbReference type="ChEBI" id="CHEBI:58349"/>
        <dbReference type="ChEBI" id="CHEBI:62192"/>
    </reaction>
</comment>
<comment type="cofactor">
    <cofactor evidence="1">
        <name>[4Fe-4S] cluster</name>
        <dbReference type="ChEBI" id="CHEBI:49883"/>
    </cofactor>
    <text evidence="1">Binds 2 [4Fe-4S] clusters per subunit.</text>
</comment>
<comment type="subunit">
    <text evidence="1">NDH is composed of at least 16 different subunits, 5 of which are encoded in the nucleus.</text>
</comment>
<comment type="subcellular location">
    <subcellularLocation>
        <location evidence="1">Plastid</location>
        <location evidence="1">Chloroplast thylakoid membrane</location>
        <topology evidence="1">Peripheral membrane protein</topology>
    </subcellularLocation>
</comment>
<comment type="similarity">
    <text evidence="1">Belongs to the complex I 23 kDa subunit family.</text>
</comment>